<evidence type="ECO:0000255" key="1">
    <source>
        <dbReference type="HAMAP-Rule" id="MF_00022"/>
    </source>
</evidence>
<keyword id="KW-0030">Aminoacyl-tRNA synthetase</keyword>
<keyword id="KW-0067">ATP-binding</keyword>
<keyword id="KW-0963">Cytoplasm</keyword>
<keyword id="KW-0436">Ligase</keyword>
<keyword id="KW-0547">Nucleotide-binding</keyword>
<keyword id="KW-0648">Protein biosynthesis</keyword>
<dbReference type="EC" id="6.1.1.17" evidence="1"/>
<dbReference type="EMBL" id="CP000792">
    <property type="protein sequence ID" value="EAT98363.1"/>
    <property type="molecule type" value="Genomic_DNA"/>
</dbReference>
<dbReference type="RefSeq" id="WP_012140345.1">
    <property type="nucleotide sequence ID" value="NC_009802.2"/>
</dbReference>
<dbReference type="SMR" id="A7ZFB9"/>
<dbReference type="STRING" id="360104.CCC13826_0242"/>
<dbReference type="KEGG" id="cco:CCC13826_0242"/>
<dbReference type="eggNOG" id="COG0008">
    <property type="taxonomic scope" value="Bacteria"/>
</dbReference>
<dbReference type="HOGENOM" id="CLU_015768_6_3_7"/>
<dbReference type="OrthoDB" id="9807503at2"/>
<dbReference type="Proteomes" id="UP000001121">
    <property type="component" value="Chromosome"/>
</dbReference>
<dbReference type="GO" id="GO:0005829">
    <property type="term" value="C:cytosol"/>
    <property type="evidence" value="ECO:0007669"/>
    <property type="project" value="TreeGrafter"/>
</dbReference>
<dbReference type="GO" id="GO:0005524">
    <property type="term" value="F:ATP binding"/>
    <property type="evidence" value="ECO:0007669"/>
    <property type="project" value="UniProtKB-UniRule"/>
</dbReference>
<dbReference type="GO" id="GO:0004818">
    <property type="term" value="F:glutamate-tRNA ligase activity"/>
    <property type="evidence" value="ECO:0007669"/>
    <property type="project" value="UniProtKB-UniRule"/>
</dbReference>
<dbReference type="GO" id="GO:0000049">
    <property type="term" value="F:tRNA binding"/>
    <property type="evidence" value="ECO:0007669"/>
    <property type="project" value="InterPro"/>
</dbReference>
<dbReference type="GO" id="GO:0008270">
    <property type="term" value="F:zinc ion binding"/>
    <property type="evidence" value="ECO:0007669"/>
    <property type="project" value="InterPro"/>
</dbReference>
<dbReference type="GO" id="GO:0006424">
    <property type="term" value="P:glutamyl-tRNA aminoacylation"/>
    <property type="evidence" value="ECO:0007669"/>
    <property type="project" value="UniProtKB-UniRule"/>
</dbReference>
<dbReference type="CDD" id="cd00808">
    <property type="entry name" value="GluRS_core"/>
    <property type="match status" value="1"/>
</dbReference>
<dbReference type="FunFam" id="3.40.50.620:FF:000007">
    <property type="entry name" value="Glutamate--tRNA ligase"/>
    <property type="match status" value="1"/>
</dbReference>
<dbReference type="Gene3D" id="1.10.10.350">
    <property type="match status" value="1"/>
</dbReference>
<dbReference type="Gene3D" id="3.40.50.620">
    <property type="entry name" value="HUPs"/>
    <property type="match status" value="1"/>
</dbReference>
<dbReference type="HAMAP" id="MF_00022">
    <property type="entry name" value="Glu_tRNA_synth_type1"/>
    <property type="match status" value="1"/>
</dbReference>
<dbReference type="InterPro" id="IPR045462">
    <property type="entry name" value="aa-tRNA-synth_I_cd-bd"/>
</dbReference>
<dbReference type="InterPro" id="IPR020751">
    <property type="entry name" value="aa-tRNA-synth_I_codon-bd_sub2"/>
</dbReference>
<dbReference type="InterPro" id="IPR001412">
    <property type="entry name" value="aa-tRNA-synth_I_CS"/>
</dbReference>
<dbReference type="InterPro" id="IPR008925">
    <property type="entry name" value="aa_tRNA-synth_I_cd-bd_sf"/>
</dbReference>
<dbReference type="InterPro" id="IPR004527">
    <property type="entry name" value="Glu-tRNA-ligase_bac/mito"/>
</dbReference>
<dbReference type="InterPro" id="IPR000924">
    <property type="entry name" value="Glu/Gln-tRNA-synth"/>
</dbReference>
<dbReference type="InterPro" id="IPR020058">
    <property type="entry name" value="Glu/Gln-tRNA-synth_Ib_cat-dom"/>
</dbReference>
<dbReference type="InterPro" id="IPR049940">
    <property type="entry name" value="GluQ/Sye"/>
</dbReference>
<dbReference type="InterPro" id="IPR033910">
    <property type="entry name" value="GluRS_core"/>
</dbReference>
<dbReference type="InterPro" id="IPR014729">
    <property type="entry name" value="Rossmann-like_a/b/a_fold"/>
</dbReference>
<dbReference type="NCBIfam" id="TIGR00464">
    <property type="entry name" value="gltX_bact"/>
    <property type="match status" value="1"/>
</dbReference>
<dbReference type="PANTHER" id="PTHR43311">
    <property type="entry name" value="GLUTAMATE--TRNA LIGASE"/>
    <property type="match status" value="1"/>
</dbReference>
<dbReference type="PANTHER" id="PTHR43311:SF2">
    <property type="entry name" value="GLUTAMATE--TRNA LIGASE, MITOCHONDRIAL-RELATED"/>
    <property type="match status" value="1"/>
</dbReference>
<dbReference type="Pfam" id="PF19269">
    <property type="entry name" value="Anticodon_2"/>
    <property type="match status" value="1"/>
</dbReference>
<dbReference type="Pfam" id="PF00749">
    <property type="entry name" value="tRNA-synt_1c"/>
    <property type="match status" value="1"/>
</dbReference>
<dbReference type="PRINTS" id="PR00987">
    <property type="entry name" value="TRNASYNTHGLU"/>
</dbReference>
<dbReference type="SUPFAM" id="SSF48163">
    <property type="entry name" value="An anticodon-binding domain of class I aminoacyl-tRNA synthetases"/>
    <property type="match status" value="1"/>
</dbReference>
<dbReference type="SUPFAM" id="SSF52374">
    <property type="entry name" value="Nucleotidylyl transferase"/>
    <property type="match status" value="1"/>
</dbReference>
<dbReference type="PROSITE" id="PS00178">
    <property type="entry name" value="AA_TRNA_LIGASE_I"/>
    <property type="match status" value="1"/>
</dbReference>
<proteinExistence type="inferred from homology"/>
<reference key="1">
    <citation type="submission" date="2007-10" db="EMBL/GenBank/DDBJ databases">
        <title>Genome sequence of Campylobacter concisus 13826 isolated from human feces.</title>
        <authorList>
            <person name="Fouts D.E."/>
            <person name="Mongodin E.F."/>
            <person name="Puiu D."/>
            <person name="Sebastian Y."/>
            <person name="Miller W.G."/>
            <person name="Mandrell R.E."/>
            <person name="On S."/>
            <person name="Nelson K.E."/>
        </authorList>
    </citation>
    <scope>NUCLEOTIDE SEQUENCE [LARGE SCALE GENOMIC DNA]</scope>
    <source>
        <strain>13826</strain>
    </source>
</reference>
<comment type="function">
    <text evidence="1">Catalyzes the attachment of glutamate to tRNA(Glu) in a two-step reaction: glutamate is first activated by ATP to form Glu-AMP and then transferred to the acceptor end of tRNA(Glu).</text>
</comment>
<comment type="catalytic activity">
    <reaction evidence="1">
        <text>tRNA(Glu) + L-glutamate + ATP = L-glutamyl-tRNA(Glu) + AMP + diphosphate</text>
        <dbReference type="Rhea" id="RHEA:23540"/>
        <dbReference type="Rhea" id="RHEA-COMP:9663"/>
        <dbReference type="Rhea" id="RHEA-COMP:9680"/>
        <dbReference type="ChEBI" id="CHEBI:29985"/>
        <dbReference type="ChEBI" id="CHEBI:30616"/>
        <dbReference type="ChEBI" id="CHEBI:33019"/>
        <dbReference type="ChEBI" id="CHEBI:78442"/>
        <dbReference type="ChEBI" id="CHEBI:78520"/>
        <dbReference type="ChEBI" id="CHEBI:456215"/>
        <dbReference type="EC" id="6.1.1.17"/>
    </reaction>
</comment>
<comment type="subunit">
    <text evidence="1">Monomer.</text>
</comment>
<comment type="subcellular location">
    <subcellularLocation>
        <location evidence="1">Cytoplasm</location>
    </subcellularLocation>
</comment>
<comment type="similarity">
    <text evidence="1">Belongs to the class-I aminoacyl-tRNA synthetase family. Glutamate--tRNA ligase type 1 subfamily.</text>
</comment>
<sequence length="459" mass="52443">MIVTRFAPSPTGYLHIGGLRTALYNYLYARANNGKFLLRIEDTDLKRNSEEATQAIKEAFAWCKLDHDGEVTYQSKRFDLYKEYVKKLLDEGKAYKCYMSKEELEELRASQEARKERPKYDNRYRDFTGTPPAGIEPVIRIKAPLSGEIVIHDGIKGEVKFKVEDILDDFIIARSDGTPTYNFTVVIDDALMGVTDVIRGDDHLSNTPKQIVLYEALGFKVPKFYHVAMINGEDGKKLSKRHGATDVMEYKKMGYLPEALLNFLVRLGWSHGDDEIFTIEDMLKYFNPNDINKSSSTYNAQKLDWLNSHYIKTLPYERLAHDMLEFGVDFKALVKGELLLNSLRERSKTLIEMANSANAIINAPKSYDEKAWAKFINENSKEILAKFAQILDRDLDAKGYEELTNKFLEQNGLKLKDLAQALRIALTGSSVSPSIFEVLEVVGSNEIKNRIQNLLKEEK</sequence>
<gene>
    <name evidence="1" type="primary">gltX2</name>
    <name type="ordered locus">Ccon26_16340</name>
    <name type="ORF">CCC13826_0242</name>
</gene>
<accession>A7ZFB9</accession>
<organism>
    <name type="scientific">Campylobacter concisus (strain 13826)</name>
    <dbReference type="NCBI Taxonomy" id="360104"/>
    <lineage>
        <taxon>Bacteria</taxon>
        <taxon>Pseudomonadati</taxon>
        <taxon>Campylobacterota</taxon>
        <taxon>Epsilonproteobacteria</taxon>
        <taxon>Campylobacterales</taxon>
        <taxon>Campylobacteraceae</taxon>
        <taxon>Campylobacter</taxon>
    </lineage>
</organism>
<protein>
    <recommendedName>
        <fullName evidence="1">Glutamate--tRNA ligase 2</fullName>
        <ecNumber evidence="1">6.1.1.17</ecNumber>
    </recommendedName>
    <alternativeName>
        <fullName evidence="1">Glutamyl-tRNA synthetase 2</fullName>
        <shortName evidence="1">GluRS 2</shortName>
    </alternativeName>
</protein>
<feature type="chain" id="PRO_0000330957" description="Glutamate--tRNA ligase 2">
    <location>
        <begin position="1"/>
        <end position="459"/>
    </location>
</feature>
<feature type="short sequence motif" description="'HIGH' region" evidence="1">
    <location>
        <begin position="8"/>
        <end position="18"/>
    </location>
</feature>
<feature type="short sequence motif" description="'KMSKS' region" evidence="1">
    <location>
        <begin position="237"/>
        <end position="241"/>
    </location>
</feature>
<feature type="binding site" evidence="1">
    <location>
        <position position="240"/>
    </location>
    <ligand>
        <name>ATP</name>
        <dbReference type="ChEBI" id="CHEBI:30616"/>
    </ligand>
</feature>
<name>SYE2_CAMC1</name>